<proteinExistence type="inferred from homology"/>
<keyword id="KW-0227">DNA damage</keyword>
<keyword id="KW-0234">DNA repair</keyword>
<keyword id="KW-0238">DNA-binding</keyword>
<keyword id="KW-0326">Glycosidase</keyword>
<keyword id="KW-0378">Hydrolase</keyword>
<keyword id="KW-0456">Lyase</keyword>
<keyword id="KW-0479">Metal-binding</keyword>
<keyword id="KW-0511">Multifunctional enzyme</keyword>
<keyword id="KW-0862">Zinc</keyword>
<keyword id="KW-0863">Zinc-finger</keyword>
<accession>A4QFD9</accession>
<reference key="1">
    <citation type="journal article" date="2007" name="Microbiology">
        <title>Comparative analysis of the Corynebacterium glutamicum group and complete genome sequence of strain R.</title>
        <authorList>
            <person name="Yukawa H."/>
            <person name="Omumasaba C.A."/>
            <person name="Nonaka H."/>
            <person name="Kos P."/>
            <person name="Okai N."/>
            <person name="Suzuki N."/>
            <person name="Suda M."/>
            <person name="Tsuge Y."/>
            <person name="Watanabe J."/>
            <person name="Ikeda Y."/>
            <person name="Vertes A.A."/>
            <person name="Inui M."/>
        </authorList>
    </citation>
    <scope>NUCLEOTIDE SEQUENCE [LARGE SCALE GENOMIC DNA]</scope>
    <source>
        <strain>R</strain>
    </source>
</reference>
<evidence type="ECO:0000250" key="1"/>
<evidence type="ECO:0000255" key="2">
    <source>
        <dbReference type="HAMAP-Rule" id="MF_00103"/>
    </source>
</evidence>
<feature type="initiator methionine" description="Removed" evidence="1">
    <location>
        <position position="1"/>
    </location>
</feature>
<feature type="chain" id="PRO_1000008691" description="Formamidopyrimidine-DNA glycosylase">
    <location>
        <begin position="2"/>
        <end position="286"/>
    </location>
</feature>
<feature type="zinc finger region" description="FPG-type" evidence="2">
    <location>
        <begin position="250"/>
        <end position="284"/>
    </location>
</feature>
<feature type="active site" description="Schiff-base intermediate with DNA" evidence="2">
    <location>
        <position position="2"/>
    </location>
</feature>
<feature type="active site" description="Proton donor" evidence="2">
    <location>
        <position position="3"/>
    </location>
</feature>
<feature type="active site" description="Proton donor; for beta-elimination activity" evidence="2">
    <location>
        <position position="61"/>
    </location>
</feature>
<feature type="active site" description="Proton donor; for delta-elimination activity" evidence="2">
    <location>
        <position position="274"/>
    </location>
</feature>
<feature type="binding site" evidence="2">
    <location>
        <position position="103"/>
    </location>
    <ligand>
        <name>DNA</name>
        <dbReference type="ChEBI" id="CHEBI:16991"/>
    </ligand>
</feature>
<feature type="binding site" evidence="2">
    <location>
        <position position="122"/>
    </location>
    <ligand>
        <name>DNA</name>
        <dbReference type="ChEBI" id="CHEBI:16991"/>
    </ligand>
</feature>
<feature type="binding site" evidence="2">
    <location>
        <position position="164"/>
    </location>
    <ligand>
        <name>DNA</name>
        <dbReference type="ChEBI" id="CHEBI:16991"/>
    </ligand>
</feature>
<comment type="function">
    <text evidence="2">Involved in base excision repair of DNA damaged by oxidation or by mutagenic agents. Acts as a DNA glycosylase that recognizes and removes damaged bases. Has a preference for oxidized purines, such as 7,8-dihydro-8-oxoguanine (8-oxoG). Has AP (apurinic/apyrimidinic) lyase activity and introduces nicks in the DNA strand. Cleaves the DNA backbone by beta-delta elimination to generate a single-strand break at the site of the removed base with both 3'- and 5'-phosphates.</text>
</comment>
<comment type="catalytic activity">
    <reaction evidence="2">
        <text>Hydrolysis of DNA containing ring-opened 7-methylguanine residues, releasing 2,6-diamino-4-hydroxy-5-(N-methyl)formamidopyrimidine.</text>
        <dbReference type="EC" id="3.2.2.23"/>
    </reaction>
</comment>
<comment type="catalytic activity">
    <reaction evidence="2">
        <text>2'-deoxyribonucleotide-(2'-deoxyribose 5'-phosphate)-2'-deoxyribonucleotide-DNA = a 3'-end 2'-deoxyribonucleotide-(2,3-dehydro-2,3-deoxyribose 5'-phosphate)-DNA + a 5'-end 5'-phospho-2'-deoxyribonucleoside-DNA + H(+)</text>
        <dbReference type="Rhea" id="RHEA:66592"/>
        <dbReference type="Rhea" id="RHEA-COMP:13180"/>
        <dbReference type="Rhea" id="RHEA-COMP:16897"/>
        <dbReference type="Rhea" id="RHEA-COMP:17067"/>
        <dbReference type="ChEBI" id="CHEBI:15378"/>
        <dbReference type="ChEBI" id="CHEBI:136412"/>
        <dbReference type="ChEBI" id="CHEBI:157695"/>
        <dbReference type="ChEBI" id="CHEBI:167181"/>
        <dbReference type="EC" id="4.2.99.18"/>
    </reaction>
</comment>
<comment type="cofactor">
    <cofactor evidence="2">
        <name>Zn(2+)</name>
        <dbReference type="ChEBI" id="CHEBI:29105"/>
    </cofactor>
    <text evidence="2">Binds 1 zinc ion per subunit.</text>
</comment>
<comment type="subunit">
    <text evidence="2">Monomer.</text>
</comment>
<comment type="similarity">
    <text evidence="2">Belongs to the FPG family.</text>
</comment>
<name>FPG_CORGB</name>
<dbReference type="EC" id="3.2.2.23" evidence="2"/>
<dbReference type="EC" id="4.2.99.18" evidence="2"/>
<dbReference type="EMBL" id="AP009044">
    <property type="protein sequence ID" value="BAF54955.1"/>
    <property type="molecule type" value="Genomic_DNA"/>
</dbReference>
<dbReference type="RefSeq" id="WP_003856374.1">
    <property type="nucleotide sequence ID" value="NC_009342.1"/>
</dbReference>
<dbReference type="SMR" id="A4QFD9"/>
<dbReference type="KEGG" id="cgt:cgR_1958"/>
<dbReference type="HOGENOM" id="CLU_038423_1_2_11"/>
<dbReference type="PhylomeDB" id="A4QFD9"/>
<dbReference type="Proteomes" id="UP000006698">
    <property type="component" value="Chromosome"/>
</dbReference>
<dbReference type="GO" id="GO:0034039">
    <property type="term" value="F:8-oxo-7,8-dihydroguanine DNA N-glycosylase activity"/>
    <property type="evidence" value="ECO:0007669"/>
    <property type="project" value="TreeGrafter"/>
</dbReference>
<dbReference type="GO" id="GO:0140078">
    <property type="term" value="F:class I DNA-(apurinic or apyrimidinic site) endonuclease activity"/>
    <property type="evidence" value="ECO:0007669"/>
    <property type="project" value="UniProtKB-EC"/>
</dbReference>
<dbReference type="GO" id="GO:0003684">
    <property type="term" value="F:damaged DNA binding"/>
    <property type="evidence" value="ECO:0007669"/>
    <property type="project" value="InterPro"/>
</dbReference>
<dbReference type="GO" id="GO:0008270">
    <property type="term" value="F:zinc ion binding"/>
    <property type="evidence" value="ECO:0007669"/>
    <property type="project" value="UniProtKB-UniRule"/>
</dbReference>
<dbReference type="GO" id="GO:0006284">
    <property type="term" value="P:base-excision repair"/>
    <property type="evidence" value="ECO:0007669"/>
    <property type="project" value="InterPro"/>
</dbReference>
<dbReference type="CDD" id="cd08966">
    <property type="entry name" value="EcFpg-like_N"/>
    <property type="match status" value="1"/>
</dbReference>
<dbReference type="FunFam" id="1.10.8.50:FF:000003">
    <property type="entry name" value="Formamidopyrimidine-DNA glycosylase"/>
    <property type="match status" value="1"/>
</dbReference>
<dbReference type="Gene3D" id="1.10.8.50">
    <property type="match status" value="1"/>
</dbReference>
<dbReference type="Gene3D" id="3.20.190.10">
    <property type="entry name" value="MutM-like, N-terminal"/>
    <property type="match status" value="1"/>
</dbReference>
<dbReference type="HAMAP" id="MF_00103">
    <property type="entry name" value="Fapy_DNA_glycosyl"/>
    <property type="match status" value="1"/>
</dbReference>
<dbReference type="InterPro" id="IPR015886">
    <property type="entry name" value="DNA_glyclase/AP_lyase_DNA-bd"/>
</dbReference>
<dbReference type="InterPro" id="IPR015887">
    <property type="entry name" value="DNA_glyclase_Znf_dom_DNA_BS"/>
</dbReference>
<dbReference type="InterPro" id="IPR020629">
    <property type="entry name" value="Formamido-pyr_DNA_Glyclase"/>
</dbReference>
<dbReference type="InterPro" id="IPR012319">
    <property type="entry name" value="FPG_cat"/>
</dbReference>
<dbReference type="InterPro" id="IPR035937">
    <property type="entry name" value="MutM-like_N-ter"/>
</dbReference>
<dbReference type="InterPro" id="IPR010979">
    <property type="entry name" value="Ribosomal_uS13-like_H2TH"/>
</dbReference>
<dbReference type="InterPro" id="IPR000214">
    <property type="entry name" value="Znf_DNA_glyclase/AP_lyase"/>
</dbReference>
<dbReference type="InterPro" id="IPR010663">
    <property type="entry name" value="Znf_FPG/IleRS"/>
</dbReference>
<dbReference type="NCBIfam" id="TIGR00577">
    <property type="entry name" value="fpg"/>
    <property type="match status" value="1"/>
</dbReference>
<dbReference type="NCBIfam" id="NF002211">
    <property type="entry name" value="PRK01103.1"/>
    <property type="match status" value="1"/>
</dbReference>
<dbReference type="PANTHER" id="PTHR22993">
    <property type="entry name" value="FORMAMIDOPYRIMIDINE-DNA GLYCOSYLASE"/>
    <property type="match status" value="1"/>
</dbReference>
<dbReference type="PANTHER" id="PTHR22993:SF9">
    <property type="entry name" value="FORMAMIDOPYRIMIDINE-DNA GLYCOSYLASE"/>
    <property type="match status" value="1"/>
</dbReference>
<dbReference type="Pfam" id="PF01149">
    <property type="entry name" value="Fapy_DNA_glyco"/>
    <property type="match status" value="1"/>
</dbReference>
<dbReference type="Pfam" id="PF06831">
    <property type="entry name" value="H2TH"/>
    <property type="match status" value="1"/>
</dbReference>
<dbReference type="Pfam" id="PF06827">
    <property type="entry name" value="zf-FPG_IleRS"/>
    <property type="match status" value="1"/>
</dbReference>
<dbReference type="SMART" id="SM00898">
    <property type="entry name" value="Fapy_DNA_glyco"/>
    <property type="match status" value="1"/>
</dbReference>
<dbReference type="SMART" id="SM01232">
    <property type="entry name" value="H2TH"/>
    <property type="match status" value="1"/>
</dbReference>
<dbReference type="SUPFAM" id="SSF57716">
    <property type="entry name" value="Glucocorticoid receptor-like (DNA-binding domain)"/>
    <property type="match status" value="1"/>
</dbReference>
<dbReference type="SUPFAM" id="SSF81624">
    <property type="entry name" value="N-terminal domain of MutM-like DNA repair proteins"/>
    <property type="match status" value="1"/>
</dbReference>
<dbReference type="SUPFAM" id="SSF46946">
    <property type="entry name" value="S13-like H2TH domain"/>
    <property type="match status" value="1"/>
</dbReference>
<dbReference type="PROSITE" id="PS51068">
    <property type="entry name" value="FPG_CAT"/>
    <property type="match status" value="1"/>
</dbReference>
<dbReference type="PROSITE" id="PS01242">
    <property type="entry name" value="ZF_FPG_1"/>
    <property type="match status" value="1"/>
</dbReference>
<dbReference type="PROSITE" id="PS51066">
    <property type="entry name" value="ZF_FPG_2"/>
    <property type="match status" value="1"/>
</dbReference>
<sequence length="286" mass="31692">MPELPEVEVVRRGLEDHMVGHTIVSATVLHPRAARNQLGGGPEIEANIAGLRVSAAKRRGKFLWLELIDAPSGETRPDLGLLVHLGMSGQMLIKEPDAPISPHLRAKIELDNGDEVWFVDQRTFGYWWLGDLVDGVPERVSHIATDVLDESADFSAIARNLKSRKSEIKRLLLNQEIVSGIGNIYADEMLWQAKIHPLQRADRLSLARLEELLQAGKDVMTKALAQGGTSFDALYVNVNGNSGYFSLSLNAYGQTGEPCGRCGTQIVRENFMNRGSHYCPNCQKRR</sequence>
<gene>
    <name evidence="2" type="primary">mutM</name>
    <name evidence="2" type="synonym">fpg</name>
    <name type="ordered locus">cgR_1958</name>
</gene>
<organism>
    <name type="scientific">Corynebacterium glutamicum (strain R)</name>
    <dbReference type="NCBI Taxonomy" id="340322"/>
    <lineage>
        <taxon>Bacteria</taxon>
        <taxon>Bacillati</taxon>
        <taxon>Actinomycetota</taxon>
        <taxon>Actinomycetes</taxon>
        <taxon>Mycobacteriales</taxon>
        <taxon>Corynebacteriaceae</taxon>
        <taxon>Corynebacterium</taxon>
    </lineage>
</organism>
<protein>
    <recommendedName>
        <fullName evidence="2">Formamidopyrimidine-DNA glycosylase</fullName>
        <shortName evidence="2">Fapy-DNA glycosylase</shortName>
        <ecNumber evidence="2">3.2.2.23</ecNumber>
    </recommendedName>
    <alternativeName>
        <fullName evidence="2">DNA-(apurinic or apyrimidinic site) lyase MutM</fullName>
        <shortName evidence="2">AP lyase MutM</shortName>
        <ecNumber evidence="2">4.2.99.18</ecNumber>
    </alternativeName>
</protein>